<name>MTNA_CITK8</name>
<feature type="chain" id="PRO_0000357161" description="Methylthioribose-1-phosphate isomerase">
    <location>
        <begin position="1"/>
        <end position="342"/>
    </location>
</feature>
<feature type="active site" description="Proton donor" evidence="1">
    <location>
        <position position="228"/>
    </location>
</feature>
<feature type="binding site" evidence="1">
    <location>
        <begin position="49"/>
        <end position="51"/>
    </location>
    <ligand>
        <name>substrate</name>
    </ligand>
</feature>
<feature type="binding site" evidence="1">
    <location>
        <position position="86"/>
    </location>
    <ligand>
        <name>substrate</name>
    </ligand>
</feature>
<feature type="binding site" evidence="1">
    <location>
        <position position="187"/>
    </location>
    <ligand>
        <name>substrate</name>
    </ligand>
</feature>
<feature type="binding site" evidence="1">
    <location>
        <begin position="238"/>
        <end position="239"/>
    </location>
    <ligand>
        <name>substrate</name>
    </ligand>
</feature>
<feature type="site" description="Transition state stabilizer" evidence="1">
    <location>
        <position position="148"/>
    </location>
</feature>
<reference key="1">
    <citation type="submission" date="2007-08" db="EMBL/GenBank/DDBJ databases">
        <authorList>
            <consortium name="The Citrobacter koseri Genome Sequencing Project"/>
            <person name="McClelland M."/>
            <person name="Sanderson E.K."/>
            <person name="Porwollik S."/>
            <person name="Spieth J."/>
            <person name="Clifton W.S."/>
            <person name="Latreille P."/>
            <person name="Courtney L."/>
            <person name="Wang C."/>
            <person name="Pepin K."/>
            <person name="Bhonagiri V."/>
            <person name="Nash W."/>
            <person name="Johnson M."/>
            <person name="Thiruvilangam P."/>
            <person name="Wilson R."/>
        </authorList>
    </citation>
    <scope>NUCLEOTIDE SEQUENCE [LARGE SCALE GENOMIC DNA]</scope>
    <source>
        <strain>ATCC BAA-895 / CDC 4225-83 / SGSC4696</strain>
    </source>
</reference>
<accession>A8ANI3</accession>
<dbReference type="EC" id="5.3.1.23" evidence="1"/>
<dbReference type="EMBL" id="CP000822">
    <property type="protein sequence ID" value="ABV15046.1"/>
    <property type="molecule type" value="Genomic_DNA"/>
</dbReference>
<dbReference type="RefSeq" id="WP_012134738.1">
    <property type="nucleotide sequence ID" value="NC_009792.1"/>
</dbReference>
<dbReference type="SMR" id="A8ANI3"/>
<dbReference type="STRING" id="290338.CKO_03974"/>
<dbReference type="GeneID" id="45137626"/>
<dbReference type="KEGG" id="cko:CKO_03974"/>
<dbReference type="HOGENOM" id="CLU_016218_1_2_6"/>
<dbReference type="OrthoDB" id="9803436at2"/>
<dbReference type="UniPathway" id="UPA00904">
    <property type="reaction ID" value="UER00874"/>
</dbReference>
<dbReference type="Proteomes" id="UP000008148">
    <property type="component" value="Chromosome"/>
</dbReference>
<dbReference type="GO" id="GO:0046523">
    <property type="term" value="F:S-methyl-5-thioribose-1-phosphate isomerase activity"/>
    <property type="evidence" value="ECO:0007669"/>
    <property type="project" value="UniProtKB-UniRule"/>
</dbReference>
<dbReference type="GO" id="GO:0019509">
    <property type="term" value="P:L-methionine salvage from methylthioadenosine"/>
    <property type="evidence" value="ECO:0007669"/>
    <property type="project" value="UniProtKB-UniRule"/>
</dbReference>
<dbReference type="FunFam" id="3.40.50.10470:FF:000006">
    <property type="entry name" value="Methylthioribose-1-phosphate isomerase"/>
    <property type="match status" value="1"/>
</dbReference>
<dbReference type="Gene3D" id="1.20.120.420">
    <property type="entry name" value="translation initiation factor eif-2b, domain 1"/>
    <property type="match status" value="1"/>
</dbReference>
<dbReference type="Gene3D" id="3.40.50.10470">
    <property type="entry name" value="Translation initiation factor eif-2b, domain 2"/>
    <property type="match status" value="1"/>
</dbReference>
<dbReference type="HAMAP" id="MF_01678">
    <property type="entry name" value="Salvage_MtnA"/>
    <property type="match status" value="1"/>
</dbReference>
<dbReference type="InterPro" id="IPR000649">
    <property type="entry name" value="IF-2B-related"/>
</dbReference>
<dbReference type="InterPro" id="IPR005251">
    <property type="entry name" value="IF-M1Pi"/>
</dbReference>
<dbReference type="InterPro" id="IPR042529">
    <property type="entry name" value="IF_2B-like_C"/>
</dbReference>
<dbReference type="InterPro" id="IPR011559">
    <property type="entry name" value="Initiation_fac_2B_a/b/d"/>
</dbReference>
<dbReference type="InterPro" id="IPR027363">
    <property type="entry name" value="M1Pi_N"/>
</dbReference>
<dbReference type="InterPro" id="IPR037171">
    <property type="entry name" value="NagB/RpiA_transferase-like"/>
</dbReference>
<dbReference type="NCBIfam" id="TIGR00524">
    <property type="entry name" value="eIF-2B_rel"/>
    <property type="match status" value="1"/>
</dbReference>
<dbReference type="NCBIfam" id="NF004326">
    <property type="entry name" value="PRK05720.1"/>
    <property type="match status" value="1"/>
</dbReference>
<dbReference type="NCBIfam" id="TIGR00512">
    <property type="entry name" value="salvage_mtnA"/>
    <property type="match status" value="1"/>
</dbReference>
<dbReference type="PANTHER" id="PTHR43475">
    <property type="entry name" value="METHYLTHIORIBOSE-1-PHOSPHATE ISOMERASE"/>
    <property type="match status" value="1"/>
</dbReference>
<dbReference type="PANTHER" id="PTHR43475:SF1">
    <property type="entry name" value="METHYLTHIORIBOSE-1-PHOSPHATE ISOMERASE"/>
    <property type="match status" value="1"/>
</dbReference>
<dbReference type="Pfam" id="PF01008">
    <property type="entry name" value="IF-2B"/>
    <property type="match status" value="1"/>
</dbReference>
<dbReference type="SUPFAM" id="SSF100950">
    <property type="entry name" value="NagB/RpiA/CoA transferase-like"/>
    <property type="match status" value="1"/>
</dbReference>
<proteinExistence type="inferred from homology"/>
<evidence type="ECO:0000255" key="1">
    <source>
        <dbReference type="HAMAP-Rule" id="MF_01678"/>
    </source>
</evidence>
<evidence type="ECO:0000305" key="2"/>
<sequence>MQTLQTTSLRVADNQLFILDQQALPQEKRWLDASTVEALVGHIHALRVRGAPLIGLSASLLLALLAESGHRRDELAIALETLRAARPTAVNLMNNLDRMKQALRQEDFVPALAAEALRLIDEDKQLCDDIARAGSALVKPGSRLLTHCNTGGLATAGTGTALGVIARAYAQGNVQNVWVDETRPLLQGGRLTAWELGELGVPYQLITDSMAASLMAKGLVDAVWVGADRIAANGDVANKIGTYSLAVLAKFHGIPFYVAAPQTTLDPHCPNGDAIPIEQRAAGEVTGVAGSFGAVQWAPENAQVYNPAFDVTPAALISGWVLDSGVVTPEDVAKGVFRTEAA</sequence>
<comment type="function">
    <text evidence="1">Catalyzes the interconversion of methylthioribose-1-phosphate (MTR-1-P) into methylthioribulose-1-phosphate (MTRu-1-P).</text>
</comment>
<comment type="catalytic activity">
    <reaction evidence="1">
        <text>5-(methylsulfanyl)-alpha-D-ribose 1-phosphate = 5-(methylsulfanyl)-D-ribulose 1-phosphate</text>
        <dbReference type="Rhea" id="RHEA:19989"/>
        <dbReference type="ChEBI" id="CHEBI:58533"/>
        <dbReference type="ChEBI" id="CHEBI:58548"/>
        <dbReference type="EC" id="5.3.1.23"/>
    </reaction>
</comment>
<comment type="pathway">
    <text evidence="1">Amino-acid biosynthesis; L-methionine biosynthesis via salvage pathway; L-methionine from S-methyl-5-thio-alpha-D-ribose 1-phosphate: step 1/6.</text>
</comment>
<comment type="similarity">
    <text evidence="2">Belongs to the eIF-2B alpha/beta/delta subunits family. MtnA subfamily.</text>
</comment>
<keyword id="KW-0028">Amino-acid biosynthesis</keyword>
<keyword id="KW-0413">Isomerase</keyword>
<keyword id="KW-0486">Methionine biosynthesis</keyword>
<keyword id="KW-1185">Reference proteome</keyword>
<organism>
    <name type="scientific">Citrobacter koseri (strain ATCC BAA-895 / CDC 4225-83 / SGSC4696)</name>
    <dbReference type="NCBI Taxonomy" id="290338"/>
    <lineage>
        <taxon>Bacteria</taxon>
        <taxon>Pseudomonadati</taxon>
        <taxon>Pseudomonadota</taxon>
        <taxon>Gammaproteobacteria</taxon>
        <taxon>Enterobacterales</taxon>
        <taxon>Enterobacteriaceae</taxon>
        <taxon>Citrobacter</taxon>
    </lineage>
</organism>
<gene>
    <name evidence="1" type="primary">mtnA</name>
    <name type="ordered locus">CKO_03974</name>
</gene>
<protein>
    <recommendedName>
        <fullName evidence="1">Methylthioribose-1-phosphate isomerase</fullName>
        <shortName evidence="1">M1Pi</shortName>
        <shortName evidence="1">MTR-1-P isomerase</shortName>
        <ecNumber evidence="1">5.3.1.23</ecNumber>
    </recommendedName>
    <alternativeName>
        <fullName evidence="1">S-methyl-5-thioribose-1-phosphate isomerase</fullName>
    </alternativeName>
</protein>